<comment type="function">
    <text evidence="1">Catalyzes the transfer of the AMP portion of ATP to flavin mononucleotide (FMN) to produce flavin adenine dinucleotide (FAD) coenzyme.</text>
</comment>
<comment type="catalytic activity">
    <reaction evidence="1">
        <text>FMN + ATP + H(+) = FAD + diphosphate</text>
        <dbReference type="Rhea" id="RHEA:17237"/>
        <dbReference type="ChEBI" id="CHEBI:15378"/>
        <dbReference type="ChEBI" id="CHEBI:30616"/>
        <dbReference type="ChEBI" id="CHEBI:33019"/>
        <dbReference type="ChEBI" id="CHEBI:57692"/>
        <dbReference type="ChEBI" id="CHEBI:58210"/>
        <dbReference type="EC" id="2.7.7.2"/>
    </reaction>
</comment>
<comment type="cofactor">
    <cofactor evidence="1">
        <name>a divalent metal cation</name>
        <dbReference type="ChEBI" id="CHEBI:60240"/>
    </cofactor>
</comment>
<comment type="pathway">
    <text evidence="1">Cofactor biosynthesis; FAD biosynthesis; FAD from FMN: step 1/1.</text>
</comment>
<comment type="subunit">
    <text evidence="1">Homodimer.</text>
</comment>
<comment type="similarity">
    <text evidence="1">Belongs to the archaeal FAD synthase family.</text>
</comment>
<reference key="1">
    <citation type="journal article" date="1998" name="DNA Res.">
        <title>Complete sequence and gene organization of the genome of a hyper-thermophilic archaebacterium, Pyrococcus horikoshii OT3.</title>
        <authorList>
            <person name="Kawarabayasi Y."/>
            <person name="Sawada M."/>
            <person name="Horikawa H."/>
            <person name="Haikawa Y."/>
            <person name="Hino Y."/>
            <person name="Yamamoto S."/>
            <person name="Sekine M."/>
            <person name="Baba S."/>
            <person name="Kosugi H."/>
            <person name="Hosoyama A."/>
            <person name="Nagai Y."/>
            <person name="Sakai M."/>
            <person name="Ogura K."/>
            <person name="Otsuka R."/>
            <person name="Nakazawa H."/>
            <person name="Takamiya M."/>
            <person name="Ohfuku Y."/>
            <person name="Funahashi T."/>
            <person name="Tanaka T."/>
            <person name="Kudoh Y."/>
            <person name="Yamazaki J."/>
            <person name="Kushida N."/>
            <person name="Oguchi A."/>
            <person name="Aoki K."/>
            <person name="Yoshizawa T."/>
            <person name="Nakamura Y."/>
            <person name="Robb F.T."/>
            <person name="Horikoshi K."/>
            <person name="Masuchi Y."/>
            <person name="Shizuya H."/>
            <person name="Kikuchi H."/>
        </authorList>
    </citation>
    <scope>NUCLEOTIDE SEQUENCE [LARGE SCALE GENOMIC DNA]</scope>
    <source>
        <strain>ATCC 700860 / DSM 12428 / JCM 9974 / NBRC 100139 / OT-3</strain>
    </source>
</reference>
<accession>O58466</accession>
<keyword id="KW-0067">ATP-binding</keyword>
<keyword id="KW-0274">FAD</keyword>
<keyword id="KW-0285">Flavoprotein</keyword>
<keyword id="KW-0288">FMN</keyword>
<keyword id="KW-0547">Nucleotide-binding</keyword>
<keyword id="KW-0548">Nucleotidyltransferase</keyword>
<keyword id="KW-0808">Transferase</keyword>
<feature type="chain" id="PRO_0000406281" description="FAD synthase">
    <location>
        <begin position="1"/>
        <end position="148"/>
    </location>
</feature>
<feature type="binding site" evidence="1">
    <location>
        <begin position="14"/>
        <end position="15"/>
    </location>
    <ligand>
        <name>ATP</name>
        <dbReference type="ChEBI" id="CHEBI:30616"/>
    </ligand>
</feature>
<feature type="binding site" evidence="1">
    <location>
        <begin position="19"/>
        <end position="22"/>
    </location>
    <ligand>
        <name>ATP</name>
        <dbReference type="ChEBI" id="CHEBI:30616"/>
    </ligand>
</feature>
<feature type="binding site" evidence="1">
    <location>
        <position position="100"/>
    </location>
    <ligand>
        <name>ATP</name>
        <dbReference type="ChEBI" id="CHEBI:30616"/>
    </ligand>
</feature>
<proteinExistence type="inferred from homology"/>
<sequence length="148" mass="16737">MGSDRKIRVVVGGVFDIIHAGHVHFLKMAKELGDELIVIVAHDETVKKRKGRPPINPAEDRAEVLKAIRYVDDVVIGKPGEISLDLIKRLKPDVIALGPDQDFDCEDLKRKLKSIGLNVEVIRLPYLYKKDRAKTSKIIERITEIFCD</sequence>
<protein>
    <recommendedName>
        <fullName evidence="1">FAD synthase</fullName>
        <ecNumber evidence="1">2.7.7.2</ecNumber>
    </recommendedName>
    <alternativeName>
        <fullName evidence="1">FMN adenylyltransferase</fullName>
    </alternativeName>
    <alternativeName>
        <fullName evidence="1">Flavin adenine dinucleotide synthase</fullName>
    </alternativeName>
</protein>
<evidence type="ECO:0000255" key="1">
    <source>
        <dbReference type="HAMAP-Rule" id="MF_02115"/>
    </source>
</evidence>
<gene>
    <name evidence="1" type="primary">ribL</name>
    <name type="ordered locus">PH0735</name>
</gene>
<dbReference type="EC" id="2.7.7.2" evidence="1"/>
<dbReference type="EMBL" id="BA000001">
    <property type="protein sequence ID" value="BAA29826.1"/>
    <property type="molecule type" value="Genomic_DNA"/>
</dbReference>
<dbReference type="PIR" id="H71120">
    <property type="entry name" value="H71120"/>
</dbReference>
<dbReference type="RefSeq" id="WP_010884831.1">
    <property type="nucleotide sequence ID" value="NC_000961.1"/>
</dbReference>
<dbReference type="SMR" id="O58466"/>
<dbReference type="STRING" id="70601.gene:9377682"/>
<dbReference type="EnsemblBacteria" id="BAA29826">
    <property type="protein sequence ID" value="BAA29826"/>
    <property type="gene ID" value="BAA29826"/>
</dbReference>
<dbReference type="GeneID" id="1443066"/>
<dbReference type="KEGG" id="pho:PH0735"/>
<dbReference type="eggNOG" id="arCOG01222">
    <property type="taxonomic scope" value="Archaea"/>
</dbReference>
<dbReference type="OrthoDB" id="1912at2157"/>
<dbReference type="UniPathway" id="UPA00277">
    <property type="reaction ID" value="UER00407"/>
</dbReference>
<dbReference type="Proteomes" id="UP000000752">
    <property type="component" value="Chromosome"/>
</dbReference>
<dbReference type="GO" id="GO:0005524">
    <property type="term" value="F:ATP binding"/>
    <property type="evidence" value="ECO:0007669"/>
    <property type="project" value="UniProtKB-UniRule"/>
</dbReference>
<dbReference type="GO" id="GO:0003919">
    <property type="term" value="F:FMN adenylyltransferase activity"/>
    <property type="evidence" value="ECO:0007669"/>
    <property type="project" value="UniProtKB-UniRule"/>
</dbReference>
<dbReference type="GO" id="GO:0006747">
    <property type="term" value="P:FAD biosynthetic process"/>
    <property type="evidence" value="ECO:0007669"/>
    <property type="project" value="UniProtKB-UniRule"/>
</dbReference>
<dbReference type="GO" id="GO:0046444">
    <property type="term" value="P:FMN metabolic process"/>
    <property type="evidence" value="ECO:0007669"/>
    <property type="project" value="UniProtKB-UniRule"/>
</dbReference>
<dbReference type="Gene3D" id="3.40.50.620">
    <property type="entry name" value="HUPs"/>
    <property type="match status" value="1"/>
</dbReference>
<dbReference type="HAMAP" id="MF_02115">
    <property type="entry name" value="FAD_synth_arch"/>
    <property type="match status" value="1"/>
</dbReference>
<dbReference type="InterPro" id="IPR050385">
    <property type="entry name" value="Archaeal_FAD_synthase"/>
</dbReference>
<dbReference type="InterPro" id="IPR004821">
    <property type="entry name" value="Cyt_trans-like"/>
</dbReference>
<dbReference type="InterPro" id="IPR024902">
    <property type="entry name" value="FAD_synth_RibL"/>
</dbReference>
<dbReference type="InterPro" id="IPR014729">
    <property type="entry name" value="Rossmann-like_a/b/a_fold"/>
</dbReference>
<dbReference type="NCBIfam" id="TIGR00125">
    <property type="entry name" value="cyt_tran_rel"/>
    <property type="match status" value="1"/>
</dbReference>
<dbReference type="PANTHER" id="PTHR43793">
    <property type="entry name" value="FAD SYNTHASE"/>
    <property type="match status" value="1"/>
</dbReference>
<dbReference type="PANTHER" id="PTHR43793:SF1">
    <property type="entry name" value="FAD SYNTHASE"/>
    <property type="match status" value="1"/>
</dbReference>
<dbReference type="Pfam" id="PF01467">
    <property type="entry name" value="CTP_transf_like"/>
    <property type="match status" value="1"/>
</dbReference>
<dbReference type="SUPFAM" id="SSF52374">
    <property type="entry name" value="Nucleotidylyl transferase"/>
    <property type="match status" value="1"/>
</dbReference>
<name>RIBL_PYRHO</name>
<organism>
    <name type="scientific">Pyrococcus horikoshii (strain ATCC 700860 / DSM 12428 / JCM 9974 / NBRC 100139 / OT-3)</name>
    <dbReference type="NCBI Taxonomy" id="70601"/>
    <lineage>
        <taxon>Archaea</taxon>
        <taxon>Methanobacteriati</taxon>
        <taxon>Methanobacteriota</taxon>
        <taxon>Thermococci</taxon>
        <taxon>Thermococcales</taxon>
        <taxon>Thermococcaceae</taxon>
        <taxon>Pyrococcus</taxon>
    </lineage>
</organism>